<reference key="1">
    <citation type="submission" date="2008-06" db="EMBL/GenBank/DDBJ databases">
        <title>Complete sequence of Chloroherpeton thalassium ATCC 35110.</title>
        <authorList>
            <consortium name="US DOE Joint Genome Institute"/>
            <person name="Lucas S."/>
            <person name="Copeland A."/>
            <person name="Lapidus A."/>
            <person name="Glavina del Rio T."/>
            <person name="Dalin E."/>
            <person name="Tice H."/>
            <person name="Bruce D."/>
            <person name="Goodwin L."/>
            <person name="Pitluck S."/>
            <person name="Schmutz J."/>
            <person name="Larimer F."/>
            <person name="Land M."/>
            <person name="Hauser L."/>
            <person name="Kyrpides N."/>
            <person name="Mikhailova N."/>
            <person name="Liu Z."/>
            <person name="Li T."/>
            <person name="Zhao F."/>
            <person name="Overmann J."/>
            <person name="Bryant D.A."/>
            <person name="Richardson P."/>
        </authorList>
    </citation>
    <scope>NUCLEOTIDE SEQUENCE [LARGE SCALE GENOMIC DNA]</scope>
    <source>
        <strain>ATCC 35110 / GB-78</strain>
    </source>
</reference>
<sequence length="353" mass="39289">MLKNDLFLRALRREPCERTPIWVMRQAGRYLPEYREVRSKADFVTLCKTPELAAEVTVQPIDIIGLDAAIIFSDILVIPEAMGMGLEIIESKGPRLYEPIRSAADIDRLVVPDVADKLGYVADAIRLTKKQLDDRVPLIGFAGAAWTLFTYAVEGGGSKNYRFAKELIYNHPDQAHKLLGKISQVITDFLLLQIEVGVNAVQIFDSWASALSEDDYKTFALPYIKQSVEAVKSKHPDIPVIVFAKDANTILTDLADTGCDALGLSWNIDIARARQELNDRVALQGNLDPTVLYASPERIREEAGKILAKFGQHTEKSGHVFNLGHGILPDVNPEHLKALVDFIKEESGKYHQA</sequence>
<protein>
    <recommendedName>
        <fullName evidence="1">Uroporphyrinogen decarboxylase</fullName>
        <shortName evidence="1">UPD</shortName>
        <shortName evidence="1">URO-D</shortName>
        <ecNumber evidence="1">4.1.1.37</ecNumber>
    </recommendedName>
</protein>
<accession>B3QXB5</accession>
<organism>
    <name type="scientific">Chloroherpeton thalassium (strain ATCC 35110 / GB-78)</name>
    <dbReference type="NCBI Taxonomy" id="517418"/>
    <lineage>
        <taxon>Bacteria</taxon>
        <taxon>Pseudomonadati</taxon>
        <taxon>Chlorobiota</taxon>
        <taxon>Chlorobiia</taxon>
        <taxon>Chlorobiales</taxon>
        <taxon>Chloroherpetonaceae</taxon>
        <taxon>Chloroherpeton</taxon>
    </lineage>
</organism>
<name>DCUP_CHLT3</name>
<keyword id="KW-0963">Cytoplasm</keyword>
<keyword id="KW-0210">Decarboxylase</keyword>
<keyword id="KW-0456">Lyase</keyword>
<keyword id="KW-0627">Porphyrin biosynthesis</keyword>
<keyword id="KW-1185">Reference proteome</keyword>
<feature type="chain" id="PRO_1000099983" description="Uroporphyrinogen decarboxylase">
    <location>
        <begin position="1"/>
        <end position="353"/>
    </location>
</feature>
<feature type="binding site" evidence="1">
    <location>
        <begin position="25"/>
        <end position="29"/>
    </location>
    <ligand>
        <name>substrate</name>
    </ligand>
</feature>
<feature type="binding site" evidence="1">
    <location>
        <position position="74"/>
    </location>
    <ligand>
        <name>substrate</name>
    </ligand>
</feature>
<feature type="binding site" evidence="1">
    <location>
        <position position="151"/>
    </location>
    <ligand>
        <name>substrate</name>
    </ligand>
</feature>
<feature type="binding site" evidence="1">
    <location>
        <position position="206"/>
    </location>
    <ligand>
        <name>substrate</name>
    </ligand>
</feature>
<feature type="binding site" evidence="1">
    <location>
        <position position="325"/>
    </location>
    <ligand>
        <name>substrate</name>
    </ligand>
</feature>
<feature type="site" description="Transition state stabilizer" evidence="1">
    <location>
        <position position="74"/>
    </location>
</feature>
<dbReference type="EC" id="4.1.1.37" evidence="1"/>
<dbReference type="EMBL" id="CP001100">
    <property type="protein sequence ID" value="ACF13389.1"/>
    <property type="molecule type" value="Genomic_DNA"/>
</dbReference>
<dbReference type="RefSeq" id="WP_012499473.1">
    <property type="nucleotide sequence ID" value="NC_011026.1"/>
</dbReference>
<dbReference type="SMR" id="B3QXB5"/>
<dbReference type="STRING" id="517418.Ctha_0924"/>
<dbReference type="KEGG" id="cts:Ctha_0924"/>
<dbReference type="eggNOG" id="COG0407">
    <property type="taxonomic scope" value="Bacteria"/>
</dbReference>
<dbReference type="HOGENOM" id="CLU_040933_0_0_10"/>
<dbReference type="OrthoDB" id="9806656at2"/>
<dbReference type="UniPathway" id="UPA00251">
    <property type="reaction ID" value="UER00321"/>
</dbReference>
<dbReference type="Proteomes" id="UP000001208">
    <property type="component" value="Chromosome"/>
</dbReference>
<dbReference type="GO" id="GO:0005829">
    <property type="term" value="C:cytosol"/>
    <property type="evidence" value="ECO:0007669"/>
    <property type="project" value="TreeGrafter"/>
</dbReference>
<dbReference type="GO" id="GO:0004853">
    <property type="term" value="F:uroporphyrinogen decarboxylase activity"/>
    <property type="evidence" value="ECO:0007669"/>
    <property type="project" value="UniProtKB-UniRule"/>
</dbReference>
<dbReference type="GO" id="GO:0006782">
    <property type="term" value="P:protoporphyrinogen IX biosynthetic process"/>
    <property type="evidence" value="ECO:0007669"/>
    <property type="project" value="UniProtKB-UniRule"/>
</dbReference>
<dbReference type="CDD" id="cd00717">
    <property type="entry name" value="URO-D"/>
    <property type="match status" value="1"/>
</dbReference>
<dbReference type="FunFam" id="3.20.20.210:FF:000001">
    <property type="entry name" value="Uroporphyrinogen decarboxylase"/>
    <property type="match status" value="1"/>
</dbReference>
<dbReference type="Gene3D" id="3.20.20.210">
    <property type="match status" value="1"/>
</dbReference>
<dbReference type="HAMAP" id="MF_00218">
    <property type="entry name" value="URO_D"/>
    <property type="match status" value="1"/>
</dbReference>
<dbReference type="InterPro" id="IPR038071">
    <property type="entry name" value="UROD/MetE-like_sf"/>
</dbReference>
<dbReference type="InterPro" id="IPR006361">
    <property type="entry name" value="Uroporphyrinogen_deCO2ase_HemE"/>
</dbReference>
<dbReference type="InterPro" id="IPR000257">
    <property type="entry name" value="Uroporphyrinogen_deCOase"/>
</dbReference>
<dbReference type="NCBIfam" id="TIGR01464">
    <property type="entry name" value="hemE"/>
    <property type="match status" value="1"/>
</dbReference>
<dbReference type="PANTHER" id="PTHR21091">
    <property type="entry name" value="METHYLTETRAHYDROFOLATE:HOMOCYSTEINE METHYLTRANSFERASE RELATED"/>
    <property type="match status" value="1"/>
</dbReference>
<dbReference type="PANTHER" id="PTHR21091:SF169">
    <property type="entry name" value="UROPORPHYRINOGEN DECARBOXYLASE"/>
    <property type="match status" value="1"/>
</dbReference>
<dbReference type="Pfam" id="PF01208">
    <property type="entry name" value="URO-D"/>
    <property type="match status" value="1"/>
</dbReference>
<dbReference type="SUPFAM" id="SSF51726">
    <property type="entry name" value="UROD/MetE-like"/>
    <property type="match status" value="1"/>
</dbReference>
<dbReference type="PROSITE" id="PS00906">
    <property type="entry name" value="UROD_1"/>
    <property type="match status" value="1"/>
</dbReference>
<dbReference type="PROSITE" id="PS00907">
    <property type="entry name" value="UROD_2"/>
    <property type="match status" value="1"/>
</dbReference>
<proteinExistence type="inferred from homology"/>
<evidence type="ECO:0000255" key="1">
    <source>
        <dbReference type="HAMAP-Rule" id="MF_00218"/>
    </source>
</evidence>
<gene>
    <name evidence="1" type="primary">hemE</name>
    <name type="ordered locus">Ctha_0924</name>
</gene>
<comment type="function">
    <text evidence="1">Catalyzes the decarboxylation of four acetate groups of uroporphyrinogen-III to yield coproporphyrinogen-III.</text>
</comment>
<comment type="catalytic activity">
    <reaction evidence="1">
        <text>uroporphyrinogen III + 4 H(+) = coproporphyrinogen III + 4 CO2</text>
        <dbReference type="Rhea" id="RHEA:19865"/>
        <dbReference type="ChEBI" id="CHEBI:15378"/>
        <dbReference type="ChEBI" id="CHEBI:16526"/>
        <dbReference type="ChEBI" id="CHEBI:57308"/>
        <dbReference type="ChEBI" id="CHEBI:57309"/>
        <dbReference type="EC" id="4.1.1.37"/>
    </reaction>
</comment>
<comment type="pathway">
    <text evidence="1">Porphyrin-containing compound metabolism; protoporphyrin-IX biosynthesis; coproporphyrinogen-III from 5-aminolevulinate: step 4/4.</text>
</comment>
<comment type="subunit">
    <text evidence="1">Homodimer.</text>
</comment>
<comment type="subcellular location">
    <subcellularLocation>
        <location evidence="1">Cytoplasm</location>
    </subcellularLocation>
</comment>
<comment type="similarity">
    <text evidence="1">Belongs to the uroporphyrinogen decarboxylase family.</text>
</comment>